<evidence type="ECO:0000255" key="1">
    <source>
        <dbReference type="HAMAP-Rule" id="MF_00391"/>
    </source>
</evidence>
<evidence type="ECO:0000256" key="2">
    <source>
        <dbReference type="SAM" id="MobiDB-lite"/>
    </source>
</evidence>
<evidence type="ECO:0000305" key="3"/>
<accession>Q7X5L7</accession>
<sequence>MKRTWQPNRRKRAKTHGFRARMKTPGGRKVLKRRRQKGRWRLTPKVNA</sequence>
<dbReference type="EMBL" id="AY256337">
    <property type="protein sequence ID" value="AAO88966.1"/>
    <property type="molecule type" value="Genomic_DNA"/>
</dbReference>
<dbReference type="RefSeq" id="WP_014516087.1">
    <property type="nucleotide sequence ID" value="NZ_AP025593.1"/>
</dbReference>
<dbReference type="SMR" id="Q7X5L7"/>
<dbReference type="STRING" id="56956.A0O31_01778"/>
<dbReference type="PATRIC" id="fig|56956.4.peg.1729"/>
<dbReference type="OrthoDB" id="9804164at2"/>
<dbReference type="GO" id="GO:1990904">
    <property type="term" value="C:ribonucleoprotein complex"/>
    <property type="evidence" value="ECO:0007669"/>
    <property type="project" value="UniProtKB-KW"/>
</dbReference>
<dbReference type="GO" id="GO:0005840">
    <property type="term" value="C:ribosome"/>
    <property type="evidence" value="ECO:0007669"/>
    <property type="project" value="UniProtKB-KW"/>
</dbReference>
<dbReference type="GO" id="GO:0003735">
    <property type="term" value="F:structural constituent of ribosome"/>
    <property type="evidence" value="ECO:0007669"/>
    <property type="project" value="InterPro"/>
</dbReference>
<dbReference type="GO" id="GO:0006412">
    <property type="term" value="P:translation"/>
    <property type="evidence" value="ECO:0007669"/>
    <property type="project" value="UniProtKB-UniRule"/>
</dbReference>
<dbReference type="FunFam" id="1.10.287.3980:FF:000001">
    <property type="entry name" value="Mitochondrial ribosomal protein L34"/>
    <property type="match status" value="1"/>
</dbReference>
<dbReference type="Gene3D" id="1.10.287.3980">
    <property type="match status" value="1"/>
</dbReference>
<dbReference type="HAMAP" id="MF_00391">
    <property type="entry name" value="Ribosomal_bL34"/>
    <property type="match status" value="1"/>
</dbReference>
<dbReference type="InterPro" id="IPR000271">
    <property type="entry name" value="Ribosomal_bL34"/>
</dbReference>
<dbReference type="InterPro" id="IPR020939">
    <property type="entry name" value="Ribosomal_bL34_CS"/>
</dbReference>
<dbReference type="NCBIfam" id="TIGR01030">
    <property type="entry name" value="rpmH_bact"/>
    <property type="match status" value="1"/>
</dbReference>
<dbReference type="PANTHER" id="PTHR14503:SF4">
    <property type="entry name" value="LARGE RIBOSOMAL SUBUNIT PROTEIN BL34M"/>
    <property type="match status" value="1"/>
</dbReference>
<dbReference type="PANTHER" id="PTHR14503">
    <property type="entry name" value="MITOCHONDRIAL RIBOSOMAL PROTEIN 34 FAMILY MEMBER"/>
    <property type="match status" value="1"/>
</dbReference>
<dbReference type="Pfam" id="PF00468">
    <property type="entry name" value="Ribosomal_L34"/>
    <property type="match status" value="1"/>
</dbReference>
<dbReference type="PROSITE" id="PS00784">
    <property type="entry name" value="RIBOSOMAL_L34"/>
    <property type="match status" value="1"/>
</dbReference>
<gene>
    <name evidence="1" type="primary">rpmH</name>
</gene>
<reference key="1">
    <citation type="journal article" date="2003" name="Proc. Natl. Acad. Sci. U.S.A.">
        <title>An unusual mechanism of bacterial gene expression revealed for the RNase P protein of Thermus strains.</title>
        <authorList>
            <person name="Feltens R."/>
            <person name="Gossringer M."/>
            <person name="Willkomm D.K."/>
            <person name="Urlaub H."/>
            <person name="Hartmann R.K."/>
        </authorList>
    </citation>
    <scope>NUCLEOTIDE SEQUENCE [GENOMIC DNA]</scope>
    <source>
        <strain>JCM 11602 / BCRC 17272 / NBRC 110747 / NCIMB 12676 / YS38</strain>
    </source>
</reference>
<protein>
    <recommendedName>
        <fullName evidence="1">Large ribosomal subunit protein bL34</fullName>
    </recommendedName>
    <alternativeName>
        <fullName evidence="3">50S ribosomal protein L34</fullName>
    </alternativeName>
</protein>
<name>RL34_THEBO</name>
<keyword id="KW-0687">Ribonucleoprotein</keyword>
<keyword id="KW-0689">Ribosomal protein</keyword>
<comment type="subunit">
    <text>Part of the 50S ribosomal subunit.</text>
</comment>
<comment type="miscellaneous">
    <text>The open reading frame (ORF) for this protein is entirely within the ORF for the RNase P protein (RnaP). The two start codons are separated by four nucleotides.</text>
</comment>
<comment type="similarity">
    <text evidence="1">Belongs to the bacterial ribosomal protein bL34 family.</text>
</comment>
<feature type="chain" id="PRO_0000187488" description="Large ribosomal subunit protein bL34">
    <location>
        <begin position="1"/>
        <end position="48"/>
    </location>
</feature>
<feature type="region of interest" description="Disordered" evidence="2">
    <location>
        <begin position="1"/>
        <end position="48"/>
    </location>
</feature>
<feature type="compositionally biased region" description="Basic residues" evidence="2">
    <location>
        <begin position="1"/>
        <end position="22"/>
    </location>
</feature>
<feature type="compositionally biased region" description="Basic residues" evidence="2">
    <location>
        <begin position="29"/>
        <end position="42"/>
    </location>
</feature>
<organism>
    <name type="scientific">Thermus brockianus</name>
    <dbReference type="NCBI Taxonomy" id="56956"/>
    <lineage>
        <taxon>Bacteria</taxon>
        <taxon>Thermotogati</taxon>
        <taxon>Deinococcota</taxon>
        <taxon>Deinococci</taxon>
        <taxon>Thermales</taxon>
        <taxon>Thermaceae</taxon>
        <taxon>Thermus</taxon>
    </lineage>
</organism>
<proteinExistence type="inferred from homology"/>